<sequence>MGLISKIARGLVRGADRMAECTSKQGPNSYNKGRGAKKIGYLTASGKFVKVREMVPVFVVPDLTGFKLKPYVSYKAPPGTEDPMTAKKLFMETVGPQIEKDLQEGTFRPEDLEKYGFEPTQEGKLFKLFPRNYIQ</sequence>
<evidence type="ECO:0000250" key="1"/>
<evidence type="ECO:0000250" key="2">
    <source>
        <dbReference type="UniProtKB" id="Q8IXM3"/>
    </source>
</evidence>
<evidence type="ECO:0000305" key="3"/>
<accession>Q6DJI4</accession>
<name>RM41A_XENLA</name>
<comment type="function">
    <text evidence="2">Component of the mitochondrial ribosome large subunit. Also involved in apoptosis and cell cycle (By similarity).</text>
</comment>
<comment type="subunit">
    <text evidence="2">Component of the mitochondrial ribosome large subunit (39S) which comprises a 16S rRNA and about 50 distinct proteins.</text>
</comment>
<comment type="subcellular location">
    <subcellularLocation>
        <location evidence="2">Mitochondrion</location>
    </subcellularLocation>
</comment>
<comment type="similarity">
    <text evidence="3">Belongs to the mitochondrion-specific ribosomal protein mL41 family.</text>
</comment>
<keyword id="KW-0053">Apoptosis</keyword>
<keyword id="KW-0131">Cell cycle</keyword>
<keyword id="KW-0496">Mitochondrion</keyword>
<keyword id="KW-1185">Reference proteome</keyword>
<keyword id="KW-0687">Ribonucleoprotein</keyword>
<keyword id="KW-0689">Ribosomal protein</keyword>
<keyword id="KW-0809">Transit peptide</keyword>
<dbReference type="EMBL" id="BC075195">
    <property type="protein sequence ID" value="AAH75195.1"/>
    <property type="molecule type" value="mRNA"/>
</dbReference>
<dbReference type="SMR" id="Q6DJI4"/>
<dbReference type="DNASU" id="446312"/>
<dbReference type="GeneID" id="446312"/>
<dbReference type="KEGG" id="xla:446312"/>
<dbReference type="AGR" id="Xenbase:XB-GENE-6256437"/>
<dbReference type="CTD" id="446312"/>
<dbReference type="Xenbase" id="XB-GENE-6256437">
    <property type="gene designation" value="mrpl41.L"/>
</dbReference>
<dbReference type="OMA" id="DRMSAWT"/>
<dbReference type="OrthoDB" id="408933at2759"/>
<dbReference type="Proteomes" id="UP000186698">
    <property type="component" value="Chromosome 8L"/>
</dbReference>
<dbReference type="Bgee" id="446312">
    <property type="expression patterns" value="Expressed in oocyte and 20 other cell types or tissues"/>
</dbReference>
<dbReference type="GO" id="GO:0005762">
    <property type="term" value="C:mitochondrial large ribosomal subunit"/>
    <property type="evidence" value="ECO:0000250"/>
    <property type="project" value="UniProtKB"/>
</dbReference>
<dbReference type="GO" id="GO:1990904">
    <property type="term" value="C:ribonucleoprotein complex"/>
    <property type="evidence" value="ECO:0000250"/>
    <property type="project" value="UniProtKB"/>
</dbReference>
<dbReference type="GO" id="GO:0003735">
    <property type="term" value="F:structural constituent of ribosome"/>
    <property type="evidence" value="ECO:0000250"/>
    <property type="project" value="UniProtKB"/>
</dbReference>
<dbReference type="GO" id="GO:0006915">
    <property type="term" value="P:apoptotic process"/>
    <property type="evidence" value="ECO:0007669"/>
    <property type="project" value="UniProtKB-KW"/>
</dbReference>
<dbReference type="GO" id="GO:0006412">
    <property type="term" value="P:translation"/>
    <property type="evidence" value="ECO:0000250"/>
    <property type="project" value="UniProtKB"/>
</dbReference>
<dbReference type="InterPro" id="IPR019189">
    <property type="entry name" value="Ribosomal_mL41"/>
</dbReference>
<dbReference type="PANTHER" id="PTHR21338:SF0">
    <property type="entry name" value="LARGE RIBOSOMAL SUBUNIT PROTEIN ML41"/>
    <property type="match status" value="1"/>
</dbReference>
<dbReference type="PANTHER" id="PTHR21338">
    <property type="entry name" value="MITOCHONDRIAL RIBOSOMAL PROTEIN L41"/>
    <property type="match status" value="1"/>
</dbReference>
<dbReference type="Pfam" id="PF09809">
    <property type="entry name" value="MRP-L27"/>
    <property type="match status" value="1"/>
</dbReference>
<protein>
    <recommendedName>
        <fullName evidence="3">Large ribosomal subunit protein mL41A</fullName>
    </recommendedName>
    <alternativeName>
        <fullName>39S ribosomal protein L41-A, mitochondrial</fullName>
        <shortName>L41mt-A</shortName>
        <shortName>MRP-L41-A</shortName>
    </alternativeName>
</protein>
<proteinExistence type="evidence at transcript level"/>
<organism>
    <name type="scientific">Xenopus laevis</name>
    <name type="common">African clawed frog</name>
    <dbReference type="NCBI Taxonomy" id="8355"/>
    <lineage>
        <taxon>Eukaryota</taxon>
        <taxon>Metazoa</taxon>
        <taxon>Chordata</taxon>
        <taxon>Craniata</taxon>
        <taxon>Vertebrata</taxon>
        <taxon>Euteleostomi</taxon>
        <taxon>Amphibia</taxon>
        <taxon>Batrachia</taxon>
        <taxon>Anura</taxon>
        <taxon>Pipoidea</taxon>
        <taxon>Pipidae</taxon>
        <taxon>Xenopodinae</taxon>
        <taxon>Xenopus</taxon>
        <taxon>Xenopus</taxon>
    </lineage>
</organism>
<gene>
    <name type="primary">mrpl41-a</name>
</gene>
<reference key="1">
    <citation type="submission" date="2004-06" db="EMBL/GenBank/DDBJ databases">
        <authorList>
            <consortium name="NIH - Xenopus Gene Collection (XGC) project"/>
        </authorList>
    </citation>
    <scope>NUCLEOTIDE SEQUENCE [LARGE SCALE MRNA]</scope>
    <source>
        <tissue>Kidney</tissue>
    </source>
</reference>
<feature type="transit peptide" description="Mitochondrion" evidence="1">
    <location>
        <begin position="1"/>
        <end position="13"/>
    </location>
</feature>
<feature type="chain" id="PRO_0000273232" description="Large ribosomal subunit protein mL41A">
    <location>
        <begin position="14"/>
        <end position="135"/>
    </location>
</feature>